<evidence type="ECO:0000250" key="1"/>
<evidence type="ECO:0000250" key="2">
    <source>
        <dbReference type="UniProtKB" id="P68438"/>
    </source>
</evidence>
<evidence type="ECO:0000305" key="3"/>
<organism>
    <name type="scientific">Vaccinia virus (strain Copenhagen)</name>
    <name type="common">VACV</name>
    <dbReference type="NCBI Taxonomy" id="10249"/>
    <lineage>
        <taxon>Viruses</taxon>
        <taxon>Varidnaviria</taxon>
        <taxon>Bamfordvirae</taxon>
        <taxon>Nucleocytoviricota</taxon>
        <taxon>Pokkesviricetes</taxon>
        <taxon>Chitovirales</taxon>
        <taxon>Poxviridae</taxon>
        <taxon>Chordopoxvirinae</taxon>
        <taxon>Orthopoxvirus</taxon>
        <taxon>Vaccinia virus</taxon>
    </lineage>
</organism>
<sequence>MDSKETILIEIIPKIKAYLLDANISPKSYDDFISRNKNIFVINLYNVSTITEEDIRLLYTTIEQNIDADDQTLVAIFSYIGYKFEQAVKEEISTSLSFNDKNTTDEMTYNLYDLFFNTLDMYLRQKKISILVNDDVRGDVIVSYKNSDLVSSFNAELEPEIKKIPFNMKNLLPYLEKNLDQLRFSKKYLDFAYLCRHIGIPISKKKYNVRYVFLYKIDGLSIPIIIKDFLDVKYVYLENTGKIYKNSFSEDHNNSLSDWGKVIIPLLKDRHLYSYIFLSSYHLHSYYTDLIARDEPVFVKRKKLDIIEIDEPEAWKRDVRVEFAPCEHQIRLKEAMKVDANYFTKINNFANEFIYYEDGVAYCRVCGINIPIFNLDAADVIKNTVIVSTFNKTIFLSEPYSYFVHSQRFIFNIIMSFDNIMKSQTWVMKYNINRLILNFLIDINSRRQEYEKKFSSEIKRGLFFLRLSANLFESQVSSTELFYVSKMLNLNYIVALVIILNSSADFIVSYMTSKNKTVEESTLKYAISVVIYDFLVKTRICEKGSLDTIVLFTDVYTSIMPEELDLHFQRITLELRKLVSIQRSALEPNYDVESRGEELPLSALKFFDTSTIIVKTMAPVHTCVEQKIVAPTPSVEPTDASLKNFKELTCDEDIKILIRVHDTNATKLVIFPSHLKIEIERKKLIIPLKSLYITNTLKYYYSNSYLYVFRFGDPMPFEEELIDHEHVQYKINCYNILRYHLLPDSDVFVYFSNSLNREALEYAFYIFLSKYVNVKQWIDENITRIKELYMINFNN</sequence>
<reference key="1">
    <citation type="journal article" date="1990" name="Virology">
        <title>The complete DNA sequence of vaccinia virus.</title>
        <authorList>
            <person name="Goebel S.J."/>
            <person name="Johnson G.P."/>
            <person name="Perkus M.E."/>
            <person name="Davis S.W."/>
            <person name="Winslow J.P."/>
            <person name="Paoletti E."/>
        </authorList>
    </citation>
    <scope>NUCLEOTIDE SEQUENCE [LARGE SCALE GENOMIC DNA]</scope>
</reference>
<reference key="2">
    <citation type="journal article" date="1990" name="Virology">
        <title>Appendix to 'The complete DNA sequence of vaccinia virus'.</title>
        <authorList>
            <person name="Goebel S.J."/>
            <person name="Johnson G.P."/>
            <person name="Perkus M.E."/>
            <person name="Davis S.W."/>
            <person name="Winslow J.P."/>
            <person name="Paoletti E."/>
        </authorList>
    </citation>
    <scope>NUCLEOTIDE SEQUENCE [LARGE SCALE GENOMIC DNA]</scope>
</reference>
<organismHost>
    <name type="scientific">Homo sapiens</name>
    <name type="common">Human</name>
    <dbReference type="NCBI Taxonomy" id="9606"/>
</organismHost>
<keyword id="KW-0002">3D-structure</keyword>
<keyword id="KW-0426">Late protein</keyword>
<keyword id="KW-1185">Reference proteome</keyword>
<keyword id="KW-0804">Transcription</keyword>
<keyword id="KW-0805">Transcription regulation</keyword>
<keyword id="KW-0806">Transcription termination</keyword>
<keyword id="KW-0946">Virion</keyword>
<name>RAP94_VACCC</name>
<accession>P68439</accession>
<accession>P07241</accession>
<accession>P08584</accession>
<accession>P21094</accession>
<gene>
    <name type="primary">OPG109</name>
    <name type="synonym">RAP94</name>
    <name type="ORF">H4L</name>
</gene>
<proteinExistence type="evidence at protein level"/>
<dbReference type="EMBL" id="M35027">
    <property type="protein sequence ID" value="AAA48091.1"/>
    <property type="molecule type" value="Genomic_DNA"/>
</dbReference>
<dbReference type="PIR" id="D42514">
    <property type="entry name" value="QQVZH4"/>
</dbReference>
<dbReference type="PDB" id="8RQK">
    <property type="method" value="EM"/>
    <property type="resolution" value="2.65 A"/>
    <property type="chains" value="I=1-795"/>
</dbReference>
<dbReference type="PDBsum" id="8RQK"/>
<dbReference type="EMDB" id="EMD-19442"/>
<dbReference type="SMR" id="P68439"/>
<dbReference type="Proteomes" id="UP000008269">
    <property type="component" value="Segment"/>
</dbReference>
<dbReference type="GO" id="GO:0044423">
    <property type="term" value="C:virion component"/>
    <property type="evidence" value="ECO:0007669"/>
    <property type="project" value="UniProtKB-KW"/>
</dbReference>
<dbReference type="GO" id="GO:0003700">
    <property type="term" value="F:DNA-binding transcription factor activity"/>
    <property type="evidence" value="ECO:0007669"/>
    <property type="project" value="InterPro"/>
</dbReference>
<dbReference type="GO" id="GO:0006353">
    <property type="term" value="P:DNA-templated transcription termination"/>
    <property type="evidence" value="ECO:0007669"/>
    <property type="project" value="UniProtKB-KW"/>
</dbReference>
<dbReference type="InterPro" id="IPR004974">
    <property type="entry name" value="Pox_Rap94"/>
</dbReference>
<dbReference type="Pfam" id="PF03294">
    <property type="entry name" value="Pox_Rap94"/>
    <property type="match status" value="1"/>
</dbReference>
<feature type="chain" id="PRO_0000099120" description="RNA polymerase-associated transcription-specificity factor RAP94">
    <location>
        <begin position="1"/>
        <end position="795"/>
    </location>
</feature>
<feature type="region of interest" description="Interaction with NPH-I; required for transcription termination" evidence="1">
    <location>
        <begin position="1"/>
        <end position="196"/>
    </location>
</feature>
<feature type="region of interest" description="Interaction with J3" evidence="1">
    <location>
        <begin position="235"/>
        <end position="256"/>
    </location>
</feature>
<protein>
    <recommendedName>
        <fullName>RNA polymerase-associated transcription-specificity factor RAP94</fullName>
    </recommendedName>
    <alternativeName>
        <fullName>Protein H4</fullName>
    </alternativeName>
    <alternativeName>
        <fullName>RPO-associated protein of 94 kDa</fullName>
    </alternativeName>
</protein>
<comment type="function">
    <text evidence="2">DNA-directed RNA polymerase-associated factor required for the transcription of viral early genes as well as for transcription termination. Within minutes after virus entry, recruits the core RNA polymerase, the early transcription factor (ETF) and other enzymes needed for transcription initiation, elongation, and termination thereby allowing synthesis of early mRNAs which are extruded through pores in the core particle. Recruits the multifunctional OPG102 protein, with poly(A) polymerase-stimulatory, cap nucleoside-2'-O-methyltransferase, and transcription elongation activities. Interacts with nucleoside triphosphatase I/OPG123, a DNA-dependent ATPase required for the termination of early transcripts. Acts as a transcription termination factor by binding, together with the capping enzyme/VTF, to the termination motif 5'-UUUUUNU-3' in the nascent mRNA. Involved as well in the packaging of RNA polymerase and other components needed for early transcription in assembling virus particles.</text>
</comment>
<comment type="subunit">
    <text evidence="2">Part of the early transcription complex composed of ETF, RAP94/OPG109, and the DNA-directed RNA polymerase. Interacts (via N-terminus) with nucleoside triphosphatase I/OPG123. Interacts with OPG102. Interacts with ETF heterodimer.</text>
</comment>
<comment type="subcellular location">
    <subcellularLocation>
        <location evidence="2">Virion</location>
    </subcellularLocation>
    <text evidence="2">All the enzymes and other proteins required to synthesize early mRNAs are packaged within the virion core along with the DNA genome.</text>
</comment>
<comment type="induction">
    <text>Expressed in the late phase of the viral replicative cycle.</text>
</comment>
<comment type="domain">
    <text evidence="2">Interacts with ETF via its N-terminus and with DNA-directed RNA polymerase via its C-terminus.</text>
</comment>
<comment type="similarity">
    <text evidence="3">Belongs to the poxviridae protein RAP94 family.</text>
</comment>